<sequence>MKTKFCTGGEAEPSPLGLLLSCGGSAAPTPGVGQQRDAAGELESKQLGGRSQPLALPPPPPPPLPLPPPPSPPLADEQPEPRTRRRAYLWCKEFLPGAWRGLREDQFHISVIRGGLSNMLFQCSLPDSIASVGDEPRKVLLRLYGAILKMRSCNKEGSEQAQNENEFQGAEAMVLESVMFAILAERSLGPKLYGIFPQGRLEQFIPSRRLDTEELCLPDISAEIAEKMATFHGMKMPFNKEPKWLFGTMEKYLNQVLRLKFSREARVQQLHKFLSYNLPLELENLRSLLQYTRSPVVFCHNDCQEGNILLLEGQENSEKQKLMLIDFEYSSYNYRGFDIGNHFCEWMYDYTYEKYPFFRANIQKYPTRKQQLHFISSYLTTFQNDFESLSSEEQSATKEDMLLEVNRFALASHFLWGLWSIVQAKISSIEFGYMEYAQARFDAYFDQKRKLGV</sequence>
<reference key="1">
    <citation type="journal article" date="1992" name="J. Biol. Chem.">
        <title>Molecular cloning, characterization, and expression in Escherichia coli of a cDNA encoding mammalian choline kinase.</title>
        <authorList>
            <person name="Uchida T."/>
            <person name="Yamashita S."/>
        </authorList>
    </citation>
    <scope>NUCLEOTIDE SEQUENCE [MRNA] (ISOFORM 2)</scope>
    <scope>TISSUE SPECIFICITY</scope>
    <source>
        <strain>Wistar</strain>
        <tissue>Liver</tissue>
    </source>
</reference>
<reference key="2">
    <citation type="journal article" date="1994" name="J. Biochem.">
        <title>Regulation of choline kinase R: analyses of alternatively spliced choline kinases and the promoter region.</title>
        <authorList>
            <person name="Uchida T."/>
        </authorList>
    </citation>
    <scope>NUCLEOTIDE SEQUENCE [GENOMIC DNA / MRNA] (ISOFORM 1)</scope>
    <source>
        <strain>Sprague-Dawley</strain>
        <strain>Wistar</strain>
        <tissue>Liver</tissue>
        <tissue>Testis</tissue>
    </source>
</reference>
<reference key="3">
    <citation type="journal article" date="2012" name="Nat. Commun.">
        <title>Quantitative maps of protein phosphorylation sites across 14 different rat organs and tissues.</title>
        <authorList>
            <person name="Lundby A."/>
            <person name="Secher A."/>
            <person name="Lage K."/>
            <person name="Nordsborg N.B."/>
            <person name="Dmytriyev A."/>
            <person name="Lundby C."/>
            <person name="Olsen J.V."/>
        </authorList>
    </citation>
    <scope>PHOSPHORYLATION [LARGE SCALE ANALYSIS] AT SER-71</scope>
    <scope>IDENTIFICATION BY MASS SPECTROMETRY [LARGE SCALE ANALYSIS]</scope>
</reference>
<protein>
    <recommendedName>
        <fullName>Choline kinase alpha</fullName>
        <shortName>CK</shortName>
        <ecNumber evidence="2">2.7.1.32</ecNumber>
    </recommendedName>
    <alternativeName>
        <fullName>CHETK-alpha</fullName>
    </alternativeName>
    <alternativeName>
        <fullName>Ethanolamine kinase</fullName>
        <shortName>EK</shortName>
        <ecNumber evidence="2">2.7.1.82</ecNumber>
    </alternativeName>
</protein>
<organism>
    <name type="scientific">Rattus norvegicus</name>
    <name type="common">Rat</name>
    <dbReference type="NCBI Taxonomy" id="10116"/>
    <lineage>
        <taxon>Eukaryota</taxon>
        <taxon>Metazoa</taxon>
        <taxon>Chordata</taxon>
        <taxon>Craniata</taxon>
        <taxon>Vertebrata</taxon>
        <taxon>Euteleostomi</taxon>
        <taxon>Mammalia</taxon>
        <taxon>Eutheria</taxon>
        <taxon>Euarchontoglires</taxon>
        <taxon>Glires</taxon>
        <taxon>Rodentia</taxon>
        <taxon>Myomorpha</taxon>
        <taxon>Muroidea</taxon>
        <taxon>Muridae</taxon>
        <taxon>Murinae</taxon>
        <taxon>Rattus</taxon>
    </lineage>
</organism>
<feature type="chain" id="PRO_0000206221" description="Choline kinase alpha">
    <location>
        <begin position="1"/>
        <end position="453"/>
    </location>
</feature>
<feature type="region of interest" description="Disordered" evidence="3">
    <location>
        <begin position="22"/>
        <end position="81"/>
    </location>
</feature>
<feature type="compositionally biased region" description="Pro residues" evidence="3">
    <location>
        <begin position="55"/>
        <end position="73"/>
    </location>
</feature>
<feature type="binding site" evidence="2">
    <location>
        <begin position="113"/>
        <end position="119"/>
    </location>
    <ligand>
        <name>ATP</name>
        <dbReference type="ChEBI" id="CHEBI:30616"/>
    </ligand>
</feature>
<feature type="binding site" evidence="2">
    <location>
        <begin position="115"/>
        <end position="117"/>
    </location>
    <ligand>
        <name>phosphocholine</name>
        <dbReference type="ChEBI" id="CHEBI:295975"/>
    </ligand>
</feature>
<feature type="binding site" evidence="2">
    <location>
        <position position="142"/>
    </location>
    <ligand>
        <name>ATP</name>
        <dbReference type="ChEBI" id="CHEBI:30616"/>
    </ligand>
</feature>
<feature type="binding site" evidence="2">
    <location>
        <begin position="203"/>
        <end position="209"/>
    </location>
    <ligand>
        <name>ATP</name>
        <dbReference type="ChEBI" id="CHEBI:30616"/>
    </ligand>
</feature>
<feature type="binding site" evidence="2">
    <location>
        <position position="304"/>
    </location>
    <ligand>
        <name>ATP</name>
        <dbReference type="ChEBI" id="CHEBI:30616"/>
    </ligand>
</feature>
<feature type="binding site" evidence="2">
    <location>
        <position position="326"/>
    </location>
    <ligand>
        <name>ATP</name>
        <dbReference type="ChEBI" id="CHEBI:30616"/>
    </ligand>
</feature>
<feature type="modified residue" description="Phosphoserine" evidence="6">
    <location>
        <position position="71"/>
    </location>
</feature>
<feature type="modified residue" description="N6-acetyllysine" evidence="2">
    <location>
        <position position="243"/>
    </location>
</feature>
<feature type="modified residue" description="Phosphoserine" evidence="2">
    <location>
        <position position="275"/>
    </location>
</feature>
<feature type="splice variant" id="VSP_001067" description="In isoform 2." evidence="5">
    <location>
        <begin position="151"/>
        <end position="168"/>
    </location>
</feature>
<evidence type="ECO:0000250" key="1">
    <source>
        <dbReference type="UniProtKB" id="O54804"/>
    </source>
</evidence>
<evidence type="ECO:0000250" key="2">
    <source>
        <dbReference type="UniProtKB" id="P35790"/>
    </source>
</evidence>
<evidence type="ECO:0000256" key="3">
    <source>
        <dbReference type="SAM" id="MobiDB-lite"/>
    </source>
</evidence>
<evidence type="ECO:0000269" key="4">
    <source>
    </source>
</evidence>
<evidence type="ECO:0000305" key="5"/>
<evidence type="ECO:0007744" key="6">
    <source>
    </source>
</evidence>
<keyword id="KW-0007">Acetylation</keyword>
<keyword id="KW-0025">Alternative splicing</keyword>
<keyword id="KW-0067">ATP-binding</keyword>
<keyword id="KW-0963">Cytoplasm</keyword>
<keyword id="KW-0418">Kinase</keyword>
<keyword id="KW-0444">Lipid biosynthesis</keyword>
<keyword id="KW-0551">Lipid droplet</keyword>
<keyword id="KW-0443">Lipid metabolism</keyword>
<keyword id="KW-0547">Nucleotide-binding</keyword>
<keyword id="KW-0594">Phospholipid biosynthesis</keyword>
<keyword id="KW-1208">Phospholipid metabolism</keyword>
<keyword id="KW-0597">Phosphoprotein</keyword>
<keyword id="KW-1185">Reference proteome</keyword>
<keyword id="KW-0808">Transferase</keyword>
<name>CHKA_RAT</name>
<comment type="function">
    <text evidence="2">Plays a key role in phospholipid biosynthesis by catalyzing the phosphorylation of free choline to phosphocholine, the first step in phosphatidylcholine biosynthesis. Also phosphorylates ethanolamine, thereby contributing to phosphatidylethanolamine biosynthesis. Has higher activity with choline.</text>
</comment>
<comment type="function">
    <molecule>Isoform 1</molecule>
    <text evidence="2">This isoform plays a key role in lipolysis of lipid droplets following glucose deprivation (By similarity). In response to glucose deprivation, phosphorylated by AMPK, promoting localization to lipid droplets (By similarity). Phosphorylation is followed by acetylation by KAT5, leading to dissociation of the homodimer into a monomer (By similarity). Monomeric CHKA isoform 1 is converted into a tyrosine-protein kinase, which phosphorylates lipid droplet structural proteins PLIN2 and PLIN3, leading to lipolysis of lipid droplets (By similarity).</text>
</comment>
<comment type="catalytic activity">
    <reaction evidence="2">
        <text>choline + ATP = phosphocholine + ADP + H(+)</text>
        <dbReference type="Rhea" id="RHEA:12837"/>
        <dbReference type="ChEBI" id="CHEBI:15354"/>
        <dbReference type="ChEBI" id="CHEBI:15378"/>
        <dbReference type="ChEBI" id="CHEBI:30616"/>
        <dbReference type="ChEBI" id="CHEBI:295975"/>
        <dbReference type="ChEBI" id="CHEBI:456216"/>
        <dbReference type="EC" id="2.7.1.32"/>
    </reaction>
    <physiologicalReaction direction="left-to-right" evidence="2">
        <dbReference type="Rhea" id="RHEA:12838"/>
    </physiologicalReaction>
</comment>
<comment type="catalytic activity">
    <reaction evidence="2">
        <text>ethanolamine + ATP = phosphoethanolamine + ADP + H(+)</text>
        <dbReference type="Rhea" id="RHEA:13069"/>
        <dbReference type="ChEBI" id="CHEBI:15378"/>
        <dbReference type="ChEBI" id="CHEBI:30616"/>
        <dbReference type="ChEBI" id="CHEBI:57603"/>
        <dbReference type="ChEBI" id="CHEBI:58190"/>
        <dbReference type="ChEBI" id="CHEBI:456216"/>
        <dbReference type="EC" id="2.7.1.82"/>
    </reaction>
    <physiologicalReaction direction="left-to-right" evidence="2">
        <dbReference type="Rhea" id="RHEA:13070"/>
    </physiologicalReaction>
</comment>
<comment type="catalytic activity">
    <molecule>Isoform 1</molecule>
    <reaction evidence="2">
        <text>L-tyrosyl-[protein] + ATP = O-phospho-L-tyrosyl-[protein] + ADP + H(+)</text>
        <dbReference type="Rhea" id="RHEA:10596"/>
        <dbReference type="Rhea" id="RHEA-COMP:10136"/>
        <dbReference type="Rhea" id="RHEA-COMP:20101"/>
        <dbReference type="ChEBI" id="CHEBI:15378"/>
        <dbReference type="ChEBI" id="CHEBI:30616"/>
        <dbReference type="ChEBI" id="CHEBI:46858"/>
        <dbReference type="ChEBI" id="CHEBI:61978"/>
        <dbReference type="ChEBI" id="CHEBI:456216"/>
    </reaction>
    <physiologicalReaction direction="left-to-right" evidence="2">
        <dbReference type="Rhea" id="RHEA:10597"/>
    </physiologicalReaction>
</comment>
<comment type="pathway">
    <text evidence="2">Phospholipid metabolism; phosphatidylcholine biosynthesis; phosphocholine from choline: step 1/1.</text>
</comment>
<comment type="pathway">
    <text evidence="2">Phospholipid metabolism; phosphatidylethanolamine biosynthesis; phosphatidylethanolamine from ethanolamine: step 1/3.</text>
</comment>
<comment type="subunit">
    <text evidence="1">Heterodimer with CHKB (By similarity). Homodimer (By similarity).</text>
</comment>
<comment type="subunit">
    <molecule>Isoform 1</molecule>
    <text evidence="2">Monomer; acetylation by KAT5 promotes dissociation of the homodimer and monomerization.</text>
</comment>
<comment type="subcellular location">
    <subcellularLocation>
        <location evidence="2">Cytoplasm</location>
        <location evidence="2">Cytosol</location>
    </subcellularLocation>
</comment>
<comment type="subcellular location">
    <molecule>Isoform 1</molecule>
    <subcellularLocation>
        <location evidence="2">Lipid droplet</location>
    </subcellularLocation>
    <text evidence="2">Isoform 1 localizes to lipid droplets following phosphorylation by AMPK.</text>
</comment>
<comment type="alternative products">
    <event type="alternative splicing"/>
    <isoform>
        <id>Q01134-1</id>
        <name>1</name>
        <name>R2</name>
        <sequence type="displayed"/>
    </isoform>
    <isoform>
        <id>Q01134-2</id>
        <name>2</name>
        <name>R1</name>
        <sequence type="described" ref="VSP_001067"/>
    </isoform>
</comment>
<comment type="tissue specificity">
    <text evidence="4">Testis, brain, lung, kidney and liver.</text>
</comment>
<comment type="PTM">
    <molecule>Isoform 1</molecule>
    <text evidence="2">Phosphorylated at Ser-275 by AMPK in response to glucose deprivation, leading to localization to lipid droplets.</text>
</comment>
<comment type="PTM">
    <molecule>Isoform 1</molecule>
    <text evidence="2">Acetylated by KAT5 at Lys-243 following phosphorylation by AMPK, leading to monomerization and conversion into a tyrosine-protein kinase.</text>
</comment>
<comment type="similarity">
    <text evidence="5">Belongs to the choline/ethanolamine kinase family.</text>
</comment>
<dbReference type="EC" id="2.7.1.32" evidence="2"/>
<dbReference type="EC" id="2.7.1.82" evidence="2"/>
<dbReference type="EMBL" id="D10261">
    <property type="protein sequence ID" value="BAA01102.1"/>
    <property type="molecule type" value="mRNA"/>
</dbReference>
<dbReference type="EMBL" id="D37884">
    <property type="protein sequence ID" value="BAA07126.1"/>
    <property type="molecule type" value="Genomic_DNA"/>
</dbReference>
<dbReference type="EMBL" id="D37885">
    <property type="protein sequence ID" value="BAA07127.1"/>
    <property type="molecule type" value="mRNA"/>
</dbReference>
<dbReference type="PIR" id="A42672">
    <property type="entry name" value="A42672"/>
</dbReference>
<dbReference type="PIR" id="JX0342">
    <property type="entry name" value="JX0342"/>
</dbReference>
<dbReference type="RefSeq" id="NP_001385515.1">
    <molecule id="Q01134-1"/>
    <property type="nucleotide sequence ID" value="NM_001398586.1"/>
</dbReference>
<dbReference type="RefSeq" id="NP_058823.1">
    <molecule id="Q01134-2"/>
    <property type="nucleotide sequence ID" value="NM_017127.3"/>
</dbReference>
<dbReference type="RefSeq" id="XP_006230770.1">
    <property type="nucleotide sequence ID" value="XM_006230708.3"/>
</dbReference>
<dbReference type="SMR" id="Q01134"/>
<dbReference type="FunCoup" id="Q01134">
    <property type="interactions" value="1300"/>
</dbReference>
<dbReference type="STRING" id="10116.ENSRNOP00000023020"/>
<dbReference type="GlyGen" id="Q01134">
    <property type="glycosylation" value="1 site"/>
</dbReference>
<dbReference type="iPTMnet" id="Q01134"/>
<dbReference type="PhosphoSitePlus" id="Q01134"/>
<dbReference type="PaxDb" id="10116-ENSRNOP00000023020"/>
<dbReference type="Ensembl" id="ENSRNOT00000022824.7">
    <molecule id="Q01134-2"/>
    <property type="protein sequence ID" value="ENSRNOP00000022824.4"/>
    <property type="gene ID" value="ENSRNOG00000016791.9"/>
</dbReference>
<dbReference type="Ensembl" id="ENSRNOT00000023020.8">
    <molecule id="Q01134-1"/>
    <property type="protein sequence ID" value="ENSRNOP00000023020.3"/>
    <property type="gene ID" value="ENSRNOG00000016791.9"/>
</dbReference>
<dbReference type="GeneID" id="29194"/>
<dbReference type="KEGG" id="rno:29194"/>
<dbReference type="UCSC" id="RGD:61944">
    <molecule id="Q01134-1"/>
    <property type="organism name" value="rat"/>
</dbReference>
<dbReference type="AGR" id="RGD:61944"/>
<dbReference type="CTD" id="1119"/>
<dbReference type="RGD" id="61944">
    <property type="gene designation" value="Chka"/>
</dbReference>
<dbReference type="eggNOG" id="KOG2686">
    <property type="taxonomic scope" value="Eukaryota"/>
</dbReference>
<dbReference type="GeneTree" id="ENSGT00950000182939"/>
<dbReference type="HOGENOM" id="CLU_012712_2_1_1"/>
<dbReference type="InParanoid" id="Q01134"/>
<dbReference type="OrthoDB" id="3649325at2759"/>
<dbReference type="PhylomeDB" id="Q01134"/>
<dbReference type="TreeFam" id="TF313549"/>
<dbReference type="Reactome" id="R-RNO-1483191">
    <property type="pathway name" value="Synthesis of PC"/>
</dbReference>
<dbReference type="Reactome" id="R-RNO-1483213">
    <property type="pathway name" value="Synthesis of PE"/>
</dbReference>
<dbReference type="SABIO-RK" id="Q01134"/>
<dbReference type="UniPathway" id="UPA00558">
    <property type="reaction ID" value="UER00741"/>
</dbReference>
<dbReference type="UniPathway" id="UPA00753">
    <property type="reaction ID" value="UER00737"/>
</dbReference>
<dbReference type="PRO" id="PR:Q01134"/>
<dbReference type="Proteomes" id="UP000002494">
    <property type="component" value="Chromosome 1"/>
</dbReference>
<dbReference type="Bgee" id="ENSRNOG00000016791">
    <property type="expression patterns" value="Expressed in liver and 20 other cell types or tissues"/>
</dbReference>
<dbReference type="ExpressionAtlas" id="Q01134">
    <property type="expression patterns" value="baseline and differential"/>
</dbReference>
<dbReference type="GO" id="GO:0005737">
    <property type="term" value="C:cytoplasm"/>
    <property type="evidence" value="ECO:0000318"/>
    <property type="project" value="GO_Central"/>
</dbReference>
<dbReference type="GO" id="GO:0005829">
    <property type="term" value="C:cytosol"/>
    <property type="evidence" value="ECO:0000250"/>
    <property type="project" value="UniProtKB"/>
</dbReference>
<dbReference type="GO" id="GO:0005811">
    <property type="term" value="C:lipid droplet"/>
    <property type="evidence" value="ECO:0000250"/>
    <property type="project" value="UniProtKB"/>
</dbReference>
<dbReference type="GO" id="GO:0005524">
    <property type="term" value="F:ATP binding"/>
    <property type="evidence" value="ECO:0000314"/>
    <property type="project" value="RGD"/>
</dbReference>
<dbReference type="GO" id="GO:0033265">
    <property type="term" value="F:choline binding"/>
    <property type="evidence" value="ECO:0000314"/>
    <property type="project" value="RGD"/>
</dbReference>
<dbReference type="GO" id="GO:0004103">
    <property type="term" value="F:choline kinase activity"/>
    <property type="evidence" value="ECO:0000314"/>
    <property type="project" value="RGD"/>
</dbReference>
<dbReference type="GO" id="GO:0004104">
    <property type="term" value="F:cholinesterase activity"/>
    <property type="evidence" value="ECO:0000266"/>
    <property type="project" value="RGD"/>
</dbReference>
<dbReference type="GO" id="GO:0004305">
    <property type="term" value="F:ethanolamine kinase activity"/>
    <property type="evidence" value="ECO:0000314"/>
    <property type="project" value="RGD"/>
</dbReference>
<dbReference type="GO" id="GO:0042802">
    <property type="term" value="F:identical protein binding"/>
    <property type="evidence" value="ECO:0000266"/>
    <property type="project" value="RGD"/>
</dbReference>
<dbReference type="GO" id="GO:0042803">
    <property type="term" value="F:protein homodimerization activity"/>
    <property type="evidence" value="ECO:0000250"/>
    <property type="project" value="UniProtKB"/>
</dbReference>
<dbReference type="GO" id="GO:0004713">
    <property type="term" value="F:protein tyrosine kinase activity"/>
    <property type="evidence" value="ECO:0000250"/>
    <property type="project" value="UniProtKB"/>
</dbReference>
<dbReference type="GO" id="GO:0006657">
    <property type="term" value="P:CDP-choline pathway"/>
    <property type="evidence" value="ECO:0000318"/>
    <property type="project" value="GO_Central"/>
</dbReference>
<dbReference type="GO" id="GO:0042149">
    <property type="term" value="P:cellular response to glucose starvation"/>
    <property type="evidence" value="ECO:0000250"/>
    <property type="project" value="UniProtKB"/>
</dbReference>
<dbReference type="GO" id="GO:0019695">
    <property type="term" value="P:choline metabolic process"/>
    <property type="evidence" value="ECO:0000314"/>
    <property type="project" value="RGD"/>
</dbReference>
<dbReference type="GO" id="GO:0006580">
    <property type="term" value="P:ethanolamine metabolic process"/>
    <property type="evidence" value="ECO:0000314"/>
    <property type="project" value="RGD"/>
</dbReference>
<dbReference type="GO" id="GO:1905691">
    <property type="term" value="P:lipid droplet disassembly"/>
    <property type="evidence" value="ECO:0000250"/>
    <property type="project" value="UniProtKB"/>
</dbReference>
<dbReference type="GO" id="GO:0006656">
    <property type="term" value="P:phosphatidylcholine biosynthetic process"/>
    <property type="evidence" value="ECO:0000250"/>
    <property type="project" value="UniProtKB"/>
</dbReference>
<dbReference type="GO" id="GO:0006646">
    <property type="term" value="P:phosphatidylethanolamine biosynthetic process"/>
    <property type="evidence" value="ECO:0000250"/>
    <property type="project" value="UniProtKB"/>
</dbReference>
<dbReference type="GO" id="GO:1904681">
    <property type="term" value="P:response to 3-methylcholanthrene"/>
    <property type="evidence" value="ECO:0000270"/>
    <property type="project" value="RGD"/>
</dbReference>
<dbReference type="GO" id="GO:0009636">
    <property type="term" value="P:response to toxic substance"/>
    <property type="evidence" value="ECO:0000270"/>
    <property type="project" value="RGD"/>
</dbReference>
<dbReference type="CDD" id="cd05156">
    <property type="entry name" value="ChoK_euk"/>
    <property type="match status" value="1"/>
</dbReference>
<dbReference type="FunFam" id="3.90.1200.10:FF:000005">
    <property type="entry name" value="Choline kinase alpha"/>
    <property type="match status" value="1"/>
</dbReference>
<dbReference type="Gene3D" id="3.90.1200.10">
    <property type="match status" value="1"/>
</dbReference>
<dbReference type="Gene3D" id="3.30.200.20">
    <property type="entry name" value="Phosphorylase Kinase, domain 1"/>
    <property type="match status" value="1"/>
</dbReference>
<dbReference type="InterPro" id="IPR011009">
    <property type="entry name" value="Kinase-like_dom_sf"/>
</dbReference>
<dbReference type="PANTHER" id="PTHR22603:SF36">
    <property type="entry name" value="CHOLINE KINASE ALPHA"/>
    <property type="match status" value="1"/>
</dbReference>
<dbReference type="PANTHER" id="PTHR22603">
    <property type="entry name" value="CHOLINE/ETHANOALAMINE KINASE"/>
    <property type="match status" value="1"/>
</dbReference>
<dbReference type="Pfam" id="PF01633">
    <property type="entry name" value="Choline_kinase"/>
    <property type="match status" value="1"/>
</dbReference>
<dbReference type="SUPFAM" id="SSF56112">
    <property type="entry name" value="Protein kinase-like (PK-like)"/>
    <property type="match status" value="1"/>
</dbReference>
<proteinExistence type="evidence at protein level"/>
<accession>Q01134</accession>
<accession>Q63114</accession>
<gene>
    <name type="primary">Chka</name>
    <name type="synonym">Chk</name>
    <name type="synonym">Ckr</name>
</gene>